<gene>
    <name type="primary">rnc</name>
    <name type="ordered locus">BDGL_001989</name>
</gene>
<dbReference type="EC" id="3.1.26.3"/>
<dbReference type="EMBL" id="CP002177">
    <property type="protein sequence ID" value="ADY82575.1"/>
    <property type="status" value="ALT_INIT"/>
    <property type="molecule type" value="Genomic_DNA"/>
</dbReference>
<dbReference type="RefSeq" id="WP_014207368.1">
    <property type="nucleotide sequence ID" value="NC_016603.1"/>
</dbReference>
<dbReference type="RefSeq" id="YP_004996257.1">
    <property type="nucleotide sequence ID" value="NC_016603.1"/>
</dbReference>
<dbReference type="SMR" id="F0KKL2"/>
<dbReference type="STRING" id="871585.BDGL_001989"/>
<dbReference type="GeneID" id="11640182"/>
<dbReference type="KEGG" id="acc:BDGL_001989"/>
<dbReference type="PATRIC" id="fig|871585.3.peg.1988"/>
<dbReference type="eggNOG" id="COG0571">
    <property type="taxonomic scope" value="Bacteria"/>
</dbReference>
<dbReference type="HOGENOM" id="CLU_000907_1_1_6"/>
<dbReference type="OrthoDB" id="9805026at2"/>
<dbReference type="Proteomes" id="UP000007477">
    <property type="component" value="Chromosome"/>
</dbReference>
<dbReference type="GO" id="GO:0005737">
    <property type="term" value="C:cytoplasm"/>
    <property type="evidence" value="ECO:0007669"/>
    <property type="project" value="UniProtKB-SubCell"/>
</dbReference>
<dbReference type="GO" id="GO:0003725">
    <property type="term" value="F:double-stranded RNA binding"/>
    <property type="evidence" value="ECO:0007669"/>
    <property type="project" value="TreeGrafter"/>
</dbReference>
<dbReference type="GO" id="GO:0046872">
    <property type="term" value="F:metal ion binding"/>
    <property type="evidence" value="ECO:0007669"/>
    <property type="project" value="UniProtKB-KW"/>
</dbReference>
<dbReference type="GO" id="GO:0004525">
    <property type="term" value="F:ribonuclease III activity"/>
    <property type="evidence" value="ECO:0007669"/>
    <property type="project" value="UniProtKB-UniRule"/>
</dbReference>
<dbReference type="GO" id="GO:0019843">
    <property type="term" value="F:rRNA binding"/>
    <property type="evidence" value="ECO:0007669"/>
    <property type="project" value="UniProtKB-KW"/>
</dbReference>
<dbReference type="GO" id="GO:0006397">
    <property type="term" value="P:mRNA processing"/>
    <property type="evidence" value="ECO:0007669"/>
    <property type="project" value="UniProtKB-UniRule"/>
</dbReference>
<dbReference type="GO" id="GO:0010468">
    <property type="term" value="P:regulation of gene expression"/>
    <property type="evidence" value="ECO:0007669"/>
    <property type="project" value="TreeGrafter"/>
</dbReference>
<dbReference type="GO" id="GO:0006364">
    <property type="term" value="P:rRNA processing"/>
    <property type="evidence" value="ECO:0007669"/>
    <property type="project" value="UniProtKB-UniRule"/>
</dbReference>
<dbReference type="GO" id="GO:0008033">
    <property type="term" value="P:tRNA processing"/>
    <property type="evidence" value="ECO:0007669"/>
    <property type="project" value="UniProtKB-KW"/>
</dbReference>
<dbReference type="CDD" id="cd10845">
    <property type="entry name" value="DSRM_RNAse_III_family"/>
    <property type="match status" value="1"/>
</dbReference>
<dbReference type="CDD" id="cd00593">
    <property type="entry name" value="RIBOc"/>
    <property type="match status" value="1"/>
</dbReference>
<dbReference type="FunFam" id="1.10.1520.10:FF:000001">
    <property type="entry name" value="Ribonuclease 3"/>
    <property type="match status" value="1"/>
</dbReference>
<dbReference type="FunFam" id="3.30.160.20:FF:000003">
    <property type="entry name" value="Ribonuclease 3"/>
    <property type="match status" value="1"/>
</dbReference>
<dbReference type="Gene3D" id="3.30.160.20">
    <property type="match status" value="1"/>
</dbReference>
<dbReference type="Gene3D" id="1.10.1520.10">
    <property type="entry name" value="Ribonuclease III domain"/>
    <property type="match status" value="1"/>
</dbReference>
<dbReference type="HAMAP" id="MF_00104">
    <property type="entry name" value="RNase_III"/>
    <property type="match status" value="1"/>
</dbReference>
<dbReference type="InterPro" id="IPR014720">
    <property type="entry name" value="dsRBD_dom"/>
</dbReference>
<dbReference type="InterPro" id="IPR011907">
    <property type="entry name" value="RNase_III"/>
</dbReference>
<dbReference type="InterPro" id="IPR000999">
    <property type="entry name" value="RNase_III_dom"/>
</dbReference>
<dbReference type="InterPro" id="IPR036389">
    <property type="entry name" value="RNase_III_sf"/>
</dbReference>
<dbReference type="NCBIfam" id="TIGR02191">
    <property type="entry name" value="RNaseIII"/>
    <property type="match status" value="1"/>
</dbReference>
<dbReference type="PANTHER" id="PTHR11207:SF0">
    <property type="entry name" value="RIBONUCLEASE 3"/>
    <property type="match status" value="1"/>
</dbReference>
<dbReference type="PANTHER" id="PTHR11207">
    <property type="entry name" value="RIBONUCLEASE III"/>
    <property type="match status" value="1"/>
</dbReference>
<dbReference type="Pfam" id="PF00035">
    <property type="entry name" value="dsrm"/>
    <property type="match status" value="1"/>
</dbReference>
<dbReference type="Pfam" id="PF14622">
    <property type="entry name" value="Ribonucleas_3_3"/>
    <property type="match status" value="1"/>
</dbReference>
<dbReference type="SMART" id="SM00358">
    <property type="entry name" value="DSRM"/>
    <property type="match status" value="1"/>
</dbReference>
<dbReference type="SMART" id="SM00535">
    <property type="entry name" value="RIBOc"/>
    <property type="match status" value="1"/>
</dbReference>
<dbReference type="SUPFAM" id="SSF54768">
    <property type="entry name" value="dsRNA-binding domain-like"/>
    <property type="match status" value="1"/>
</dbReference>
<dbReference type="SUPFAM" id="SSF69065">
    <property type="entry name" value="RNase III domain-like"/>
    <property type="match status" value="1"/>
</dbReference>
<dbReference type="PROSITE" id="PS50137">
    <property type="entry name" value="DS_RBD"/>
    <property type="match status" value="1"/>
</dbReference>
<dbReference type="PROSITE" id="PS00517">
    <property type="entry name" value="RNASE_3_1"/>
    <property type="match status" value="1"/>
</dbReference>
<dbReference type="PROSITE" id="PS50142">
    <property type="entry name" value="RNASE_3_2"/>
    <property type="match status" value="1"/>
</dbReference>
<proteinExistence type="inferred from homology"/>
<keyword id="KW-0963">Cytoplasm</keyword>
<keyword id="KW-0255">Endonuclease</keyword>
<keyword id="KW-0378">Hydrolase</keyword>
<keyword id="KW-0460">Magnesium</keyword>
<keyword id="KW-0479">Metal-binding</keyword>
<keyword id="KW-0507">mRNA processing</keyword>
<keyword id="KW-0540">Nuclease</keyword>
<keyword id="KW-1185">Reference proteome</keyword>
<keyword id="KW-0694">RNA-binding</keyword>
<keyword id="KW-0698">rRNA processing</keyword>
<keyword id="KW-0699">rRNA-binding</keyword>
<keyword id="KW-0819">tRNA processing</keyword>
<accession>F0KKL2</accession>
<reference key="1">
    <citation type="journal article" date="2011" name="J. Bacteriol.">
        <title>Genome sequence of Acinetobacter calcoaceticus PHEA-2, isolated from industry wastewater.</title>
        <authorList>
            <person name="Zhan Y."/>
            <person name="Yan Y."/>
            <person name="Zhang W."/>
            <person name="Yu H."/>
            <person name="Chen M."/>
            <person name="Lu W."/>
            <person name="Ping S."/>
            <person name="Peng Z."/>
            <person name="Yuan M."/>
            <person name="Zhou Z."/>
            <person name="Elmerich C."/>
            <person name="Lin M."/>
        </authorList>
    </citation>
    <scope>NUCLEOTIDE SEQUENCE [LARGE SCALE GENOMIC DNA]</scope>
    <source>
        <strain>PHEA-2</strain>
    </source>
</reference>
<sequence>MIKHQFKLSDPRLLSRIGYQFKQLELLQLALTHRSVSHKYNYERLEFLGDSLLGMIIANYLYHAYPNENEGRLTRMRATLVRQEALGKIATDLQLSRCLILSTGELKSGGHHRESILADTVEAIIGAIYLDSGDLNLLKDIVLKWYIPYLDHIEPTDQLKDPKSRLQEYLQARKKPLPVYEVVDIQGDAPHQHFKVECVVDGLPKIYGEGSSRRFAEQAAAAEILKLLEQ</sequence>
<evidence type="ECO:0000250" key="1"/>
<evidence type="ECO:0000255" key="2"/>
<evidence type="ECO:0000305" key="3"/>
<protein>
    <recommendedName>
        <fullName>Ribonuclease 3</fullName>
        <ecNumber>3.1.26.3</ecNumber>
    </recommendedName>
    <alternativeName>
        <fullName>Ribonuclease III</fullName>
        <shortName>RNase III</shortName>
    </alternativeName>
</protein>
<organism>
    <name type="scientific">Acinetobacter pittii (strain PHEA-2)</name>
    <dbReference type="NCBI Taxonomy" id="871585"/>
    <lineage>
        <taxon>Bacteria</taxon>
        <taxon>Pseudomonadati</taxon>
        <taxon>Pseudomonadota</taxon>
        <taxon>Gammaproteobacteria</taxon>
        <taxon>Moraxellales</taxon>
        <taxon>Moraxellaceae</taxon>
        <taxon>Acinetobacter</taxon>
        <taxon>Acinetobacter calcoaceticus/baumannii complex</taxon>
    </lineage>
</organism>
<feature type="chain" id="PRO_0000416603" description="Ribonuclease 3">
    <location>
        <begin position="1"/>
        <end position="230"/>
    </location>
</feature>
<feature type="domain" description="RNase III">
    <location>
        <begin position="10"/>
        <end position="133"/>
    </location>
</feature>
<feature type="domain" description="DRBM">
    <location>
        <begin position="161"/>
        <end position="230"/>
    </location>
</feature>
<feature type="active site" evidence="2">
    <location>
        <position position="50"/>
    </location>
</feature>
<feature type="active site" evidence="1">
    <location>
        <position position="122"/>
    </location>
</feature>
<feature type="binding site" evidence="1">
    <location>
        <position position="46"/>
    </location>
    <ligand>
        <name>Mg(2+)</name>
        <dbReference type="ChEBI" id="CHEBI:18420"/>
    </ligand>
</feature>
<feature type="binding site" evidence="1">
    <location>
        <position position="119"/>
    </location>
    <ligand>
        <name>Mg(2+)</name>
        <dbReference type="ChEBI" id="CHEBI:18420"/>
    </ligand>
</feature>
<feature type="binding site" evidence="1">
    <location>
        <position position="122"/>
    </location>
    <ligand>
        <name>Mg(2+)</name>
        <dbReference type="ChEBI" id="CHEBI:18420"/>
    </ligand>
</feature>
<name>RNC_ACIP2</name>
<comment type="function">
    <text evidence="1">Digests double-stranded RNA. Involved in the processing of primary rRNA transcript to yield the immediate precursors to the large and small rRNAs (23S and 16S). Processes some mRNAs, and tRNAs when they are encoded in the rRNA operon. Processes pre-crRNA and tracrRNA of type II CRISPR loci if present in the organism (By similarity).</text>
</comment>
<comment type="catalytic activity">
    <reaction>
        <text>Endonucleolytic cleavage to 5'-phosphomonoester.</text>
        <dbReference type="EC" id="3.1.26.3"/>
    </reaction>
</comment>
<comment type="cofactor">
    <cofactor evidence="1">
        <name>Mg(2+)</name>
        <dbReference type="ChEBI" id="CHEBI:18420"/>
    </cofactor>
</comment>
<comment type="subunit">
    <text evidence="1">Homodimer.</text>
</comment>
<comment type="subcellular location">
    <subcellularLocation>
        <location evidence="1">Cytoplasm</location>
    </subcellularLocation>
</comment>
<comment type="similarity">
    <text evidence="3">Belongs to the ribonuclease III family.</text>
</comment>
<comment type="sequence caution" evidence="3">
    <conflict type="erroneous initiation">
        <sequence resource="EMBL-CDS" id="ADY82575"/>
    </conflict>
    <text>Truncated N-terminus.</text>
</comment>